<sequence length="445" mass="48832">AVMGRNLALNIESRGYTVSIFNRSREKTEEVVAENPGKKLVPYYTVKEFVESLETPRRILLMVKAGAGTDAAIDSLKPYLDKGDIIIDGGNTFFQDTIRRNRELSAEGFNFIGTGVSGGEEGALKGPSIMPGGQKEAYELVAPILTKIAAVAEDGEPCVIYIGADGAGHYVKMVHNGIEYGDMQLIAEAYSLLKGGLNLSNEELATTFTEWNEGELSSYLIDITKDIFTKKDEEGKYLVDVILDEAANKGTGKWTSQSSLDLGEPLSLITESVFARYISSLKDQRVAASKVLSGPQAKLAGDKAEFVEKVRRALYLGKIVSYAQGFSQLRAASDEYNWDLNYGEIAKIFRAGCIIRAQFLQKITDAYAENKGIANLLLAPYFKNIADEYQQALRDVVAYAVQNGIPVPTFSAAVAYYDSYRSAVLPANLIQAQRDYFGAHTYKRT</sequence>
<dbReference type="EC" id="1.1.1.44"/>
<dbReference type="EMBL" id="U14466">
    <property type="protein sequence ID" value="AAC43814.1"/>
    <property type="molecule type" value="Genomic_DNA"/>
</dbReference>
<dbReference type="PIR" id="I40709">
    <property type="entry name" value="I40709"/>
</dbReference>
<dbReference type="SMR" id="P41583"/>
<dbReference type="STRING" id="1333848.CFNIH1_21405"/>
<dbReference type="UniPathway" id="UPA00115">
    <property type="reaction ID" value="UER00410"/>
</dbReference>
<dbReference type="GO" id="GO:0050661">
    <property type="term" value="F:NADP binding"/>
    <property type="evidence" value="ECO:0007669"/>
    <property type="project" value="InterPro"/>
</dbReference>
<dbReference type="GO" id="GO:0004616">
    <property type="term" value="F:phosphogluconate dehydrogenase (decarboxylating) activity"/>
    <property type="evidence" value="ECO:0000250"/>
    <property type="project" value="UniProtKB"/>
</dbReference>
<dbReference type="GO" id="GO:0019521">
    <property type="term" value="P:D-gluconate metabolic process"/>
    <property type="evidence" value="ECO:0007669"/>
    <property type="project" value="UniProtKB-KW"/>
</dbReference>
<dbReference type="GO" id="GO:0016054">
    <property type="term" value="P:organic acid catabolic process"/>
    <property type="evidence" value="ECO:0007669"/>
    <property type="project" value="UniProtKB-ARBA"/>
</dbReference>
<dbReference type="GO" id="GO:0006098">
    <property type="term" value="P:pentose-phosphate shunt"/>
    <property type="evidence" value="ECO:0000250"/>
    <property type="project" value="UniProtKB"/>
</dbReference>
<dbReference type="FunFam" id="1.10.1040.10:FF:000002">
    <property type="entry name" value="6-phosphogluconate dehydrogenase, decarboxylating"/>
    <property type="match status" value="1"/>
</dbReference>
<dbReference type="FunFam" id="3.40.50.720:FF:000007">
    <property type="entry name" value="6-phosphogluconate dehydrogenase, decarboxylating"/>
    <property type="match status" value="1"/>
</dbReference>
<dbReference type="Gene3D" id="1.20.5.320">
    <property type="entry name" value="6-Phosphogluconate Dehydrogenase, domain 3"/>
    <property type="match status" value="1"/>
</dbReference>
<dbReference type="Gene3D" id="1.10.1040.10">
    <property type="entry name" value="N-(1-d-carboxylethyl)-l-norvaline Dehydrogenase, domain 2"/>
    <property type="match status" value="1"/>
</dbReference>
<dbReference type="Gene3D" id="3.40.50.720">
    <property type="entry name" value="NAD(P)-binding Rossmann-like Domain"/>
    <property type="match status" value="1"/>
</dbReference>
<dbReference type="InterPro" id="IPR008927">
    <property type="entry name" value="6-PGluconate_DH-like_C_sf"/>
</dbReference>
<dbReference type="InterPro" id="IPR013328">
    <property type="entry name" value="6PGD_dom2"/>
</dbReference>
<dbReference type="InterPro" id="IPR006114">
    <property type="entry name" value="6PGDH_C"/>
</dbReference>
<dbReference type="InterPro" id="IPR006113">
    <property type="entry name" value="6PGDH_Gnd/GntZ"/>
</dbReference>
<dbReference type="InterPro" id="IPR006115">
    <property type="entry name" value="6PGDH_NADP-bd"/>
</dbReference>
<dbReference type="InterPro" id="IPR006184">
    <property type="entry name" value="6PGdom_BS"/>
</dbReference>
<dbReference type="InterPro" id="IPR036291">
    <property type="entry name" value="NAD(P)-bd_dom_sf"/>
</dbReference>
<dbReference type="InterPro" id="IPR006183">
    <property type="entry name" value="Pgluconate_DH"/>
</dbReference>
<dbReference type="NCBIfam" id="TIGR00873">
    <property type="entry name" value="gnd"/>
    <property type="match status" value="1"/>
</dbReference>
<dbReference type="NCBIfam" id="NF006765">
    <property type="entry name" value="PRK09287.1"/>
    <property type="match status" value="1"/>
</dbReference>
<dbReference type="PANTHER" id="PTHR11811">
    <property type="entry name" value="6-PHOSPHOGLUCONATE DEHYDROGENASE"/>
    <property type="match status" value="1"/>
</dbReference>
<dbReference type="Pfam" id="PF00393">
    <property type="entry name" value="6PGD"/>
    <property type="match status" value="1"/>
</dbReference>
<dbReference type="Pfam" id="PF03446">
    <property type="entry name" value="NAD_binding_2"/>
    <property type="match status" value="1"/>
</dbReference>
<dbReference type="PIRSF" id="PIRSF000109">
    <property type="entry name" value="6PGD"/>
    <property type="match status" value="1"/>
</dbReference>
<dbReference type="PRINTS" id="PR00076">
    <property type="entry name" value="6PGDHDRGNASE"/>
</dbReference>
<dbReference type="SMART" id="SM01350">
    <property type="entry name" value="6PGD"/>
    <property type="match status" value="1"/>
</dbReference>
<dbReference type="SUPFAM" id="SSF48179">
    <property type="entry name" value="6-phosphogluconate dehydrogenase C-terminal domain-like"/>
    <property type="match status" value="1"/>
</dbReference>
<dbReference type="SUPFAM" id="SSF51735">
    <property type="entry name" value="NAD(P)-binding Rossmann-fold domains"/>
    <property type="match status" value="1"/>
</dbReference>
<dbReference type="PROSITE" id="PS00461">
    <property type="entry name" value="6PGD"/>
    <property type="match status" value="1"/>
</dbReference>
<feature type="chain" id="PRO_0000090036" description="6-phosphogluconate dehydrogenase, decarboxylating">
    <location>
        <begin position="1" status="less than"/>
        <end position="445" status="greater than"/>
    </location>
</feature>
<feature type="active site" description="Proton acceptor" evidence="1">
    <location>
        <position position="172"/>
    </location>
</feature>
<feature type="active site" description="Proton donor" evidence="1">
    <location>
        <position position="179"/>
    </location>
</feature>
<feature type="binding site" evidence="1">
    <location>
        <begin position="1"/>
        <end position="4"/>
    </location>
    <ligand>
        <name>NADP(+)</name>
        <dbReference type="ChEBI" id="CHEBI:58349"/>
    </ligand>
</feature>
<feature type="binding site" evidence="1">
    <location>
        <begin position="22"/>
        <end position="24"/>
    </location>
    <ligand>
        <name>NADP(+)</name>
        <dbReference type="ChEBI" id="CHEBI:58349"/>
    </ligand>
</feature>
<feature type="binding site" evidence="1">
    <location>
        <begin position="63"/>
        <end position="65"/>
    </location>
    <ligand>
        <name>NADP(+)</name>
        <dbReference type="ChEBI" id="CHEBI:58349"/>
    </ligand>
</feature>
<feature type="binding site" evidence="1">
    <location>
        <position position="91"/>
    </location>
    <ligand>
        <name>NADP(+)</name>
        <dbReference type="ChEBI" id="CHEBI:58349"/>
    </ligand>
</feature>
<feature type="binding site" description="in other chain" evidence="1">
    <location>
        <position position="91"/>
    </location>
    <ligand>
        <name>substrate</name>
        <note>ligand shared between dimeric partners</note>
    </ligand>
</feature>
<feature type="binding site" description="in other chain" evidence="1">
    <location>
        <begin position="117"/>
        <end position="119"/>
    </location>
    <ligand>
        <name>substrate</name>
        <note>ligand shared between dimeric partners</note>
    </ligand>
</feature>
<feature type="binding site" description="in other chain" evidence="1">
    <location>
        <begin position="175"/>
        <end position="176"/>
    </location>
    <ligand>
        <name>substrate</name>
        <note>ligand shared between dimeric partners</note>
    </ligand>
</feature>
<feature type="binding site" description="in other chain" evidence="1">
    <location>
        <position position="180"/>
    </location>
    <ligand>
        <name>substrate</name>
        <note>ligand shared between dimeric partners</note>
    </ligand>
</feature>
<feature type="binding site" description="in other chain" evidence="1">
    <location>
        <position position="249"/>
    </location>
    <ligand>
        <name>substrate</name>
        <note>ligand shared between dimeric partners</note>
    </ligand>
</feature>
<feature type="binding site" description="in other chain" evidence="1">
    <location>
        <position position="276"/>
    </location>
    <ligand>
        <name>substrate</name>
        <note>ligand shared between dimeric partners</note>
    </ligand>
</feature>
<feature type="binding site" evidence="1">
    <location>
        <position position="434"/>
    </location>
    <ligand>
        <name>substrate</name>
        <note>ligand shared between dimeric partners</note>
    </ligand>
</feature>
<feature type="binding site" evidence="1">
    <location>
        <position position="440"/>
    </location>
    <ligand>
        <name>substrate</name>
        <note>ligand shared between dimeric partners</note>
    </ligand>
</feature>
<feature type="non-terminal residue">
    <location>
        <position position="1"/>
    </location>
</feature>
<feature type="non-terminal residue">
    <location>
        <position position="445"/>
    </location>
</feature>
<keyword id="KW-0311">Gluconate utilization</keyword>
<keyword id="KW-0521">NADP</keyword>
<keyword id="KW-0560">Oxidoreductase</keyword>
<keyword id="KW-0570">Pentose shunt</keyword>
<name>6PGD_CITFR</name>
<evidence type="ECO:0000250" key="1"/>
<evidence type="ECO:0000305" key="2"/>
<protein>
    <recommendedName>
        <fullName>6-phosphogluconate dehydrogenase, decarboxylating</fullName>
        <ecNumber>1.1.1.44</ecNumber>
    </recommendedName>
</protein>
<accession>P41583</accession>
<proteinExistence type="inferred from homology"/>
<comment type="function">
    <text evidence="1">Catalyzes the oxidative decarboxylation of 6-phosphogluconate to ribulose 5-phosphate and CO(2), with concomitant reduction of NADP to NADPH.</text>
</comment>
<comment type="catalytic activity">
    <reaction>
        <text>6-phospho-D-gluconate + NADP(+) = D-ribulose 5-phosphate + CO2 + NADPH</text>
        <dbReference type="Rhea" id="RHEA:10116"/>
        <dbReference type="ChEBI" id="CHEBI:16526"/>
        <dbReference type="ChEBI" id="CHEBI:57783"/>
        <dbReference type="ChEBI" id="CHEBI:58121"/>
        <dbReference type="ChEBI" id="CHEBI:58349"/>
        <dbReference type="ChEBI" id="CHEBI:58759"/>
        <dbReference type="EC" id="1.1.1.44"/>
    </reaction>
</comment>
<comment type="pathway">
    <text>Carbohydrate degradation; pentose phosphate pathway; D-ribulose 5-phosphate from D-glucose 6-phosphate (oxidative stage): step 3/3.</text>
</comment>
<comment type="subunit">
    <text evidence="1">Homodimer.</text>
</comment>
<comment type="similarity">
    <text evidence="2">Belongs to the 6-phosphogluconate dehydrogenase family.</text>
</comment>
<gene>
    <name type="primary">gnd</name>
</gene>
<organism>
    <name type="scientific">Citrobacter freundii</name>
    <dbReference type="NCBI Taxonomy" id="546"/>
    <lineage>
        <taxon>Bacteria</taxon>
        <taxon>Pseudomonadati</taxon>
        <taxon>Pseudomonadota</taxon>
        <taxon>Gammaproteobacteria</taxon>
        <taxon>Enterobacterales</taxon>
        <taxon>Enterobacteriaceae</taxon>
        <taxon>Citrobacter</taxon>
        <taxon>Citrobacter freundii complex</taxon>
    </lineage>
</organism>
<reference key="1">
    <citation type="journal article" date="1994" name="Proc. Natl. Acad. Sci. U.S.A.">
        <title>Intergeneric transfer and recombination of the 6-phosphogluconate dehydrogenase gene (gnd) in enteric bacteria.</title>
        <authorList>
            <person name="Nelson K."/>
            <person name="Selander R.K."/>
        </authorList>
    </citation>
    <scope>NUCLEOTIDE SEQUENCE [GENOMIC DNA]</scope>
    <source>
        <strain>ATCC 8090 / DSM 30039 / JCM 1657 / LMG 3246 / NCTC 9750</strain>
    </source>
</reference>